<name>RIM11_YEAST</name>
<gene>
    <name type="primary">RIM11</name>
    <name type="synonym">GSK3</name>
    <name type="synonym">MDS1</name>
    <name type="ordered locus">YMR139W</name>
    <name type="ORF">YM9375.08</name>
</gene>
<keyword id="KW-0067">ATP-binding</keyword>
<keyword id="KW-0418">Kinase</keyword>
<keyword id="KW-0547">Nucleotide-binding</keyword>
<keyword id="KW-0597">Phosphoprotein</keyword>
<keyword id="KW-1185">Reference proteome</keyword>
<keyword id="KW-0723">Serine/threonine-protein kinase</keyword>
<keyword id="KW-0808">Transferase</keyword>
<proteinExistence type="evidence at protein level"/>
<organism>
    <name type="scientific">Saccharomyces cerevisiae (strain ATCC 204508 / S288c)</name>
    <name type="common">Baker's yeast</name>
    <dbReference type="NCBI Taxonomy" id="559292"/>
    <lineage>
        <taxon>Eukaryota</taxon>
        <taxon>Fungi</taxon>
        <taxon>Dikarya</taxon>
        <taxon>Ascomycota</taxon>
        <taxon>Saccharomycotina</taxon>
        <taxon>Saccharomycetes</taxon>
        <taxon>Saccharomycetales</taxon>
        <taxon>Saccharomycetaceae</taxon>
        <taxon>Saccharomyces</taxon>
    </lineage>
</organism>
<reference key="1">
    <citation type="journal article" date="1994" name="Mol. Cell. Biol.">
        <title>MDS1, a dosage suppressor of an mck1 mutant, encodes a putative yeast homolog of glycogen synthase kinase 3.</title>
        <authorList>
            <person name="Puziss J.W."/>
            <person name="Hardy T.A."/>
            <person name="Johnson R.B."/>
            <person name="Roach P.J."/>
            <person name="Hieter P."/>
        </authorList>
    </citation>
    <scope>NUCLEOTIDE SEQUENCE</scope>
    <source>
        <strain>ATCC 204508 / S288c</strain>
    </source>
</reference>
<reference key="2">
    <citation type="journal article" date="1994" name="Mol. Cell. Biol.">
        <title>Analysis of RIM11, a yeast protein kinase that phosphorylates the meiotic activator IME1.</title>
        <authorList>
            <person name="Bowdish K.S."/>
            <person name="Yuan H.E."/>
            <person name="Mitchell A.P."/>
        </authorList>
    </citation>
    <scope>NUCLEOTIDE SEQUENCE [GENOMIC DNA]</scope>
</reference>
<reference key="3">
    <citation type="journal article" date="1993" name="Gene">
        <title>A Saccharomyces cerevisiae protein-serine kinase related to mammalian glycogen synthase kinase-3 and the Drosophila melanogaster gene shaggy product.</title>
        <authorList>
            <person name="Bianchi M.W."/>
            <person name="Plyte S.E."/>
            <person name="Kreis M."/>
            <person name="Woodgett J.R."/>
        </authorList>
    </citation>
    <scope>NUCLEOTIDE SEQUENCE</scope>
</reference>
<reference key="4">
    <citation type="journal article" date="1997" name="Nature">
        <title>The nucleotide sequence of Saccharomyces cerevisiae chromosome XIII.</title>
        <authorList>
            <person name="Bowman S."/>
            <person name="Churcher C.M."/>
            <person name="Badcock K."/>
            <person name="Brown D."/>
            <person name="Chillingworth T."/>
            <person name="Connor R."/>
            <person name="Dedman K."/>
            <person name="Devlin K."/>
            <person name="Gentles S."/>
            <person name="Hamlin N."/>
            <person name="Hunt S."/>
            <person name="Jagels K."/>
            <person name="Lye G."/>
            <person name="Moule S."/>
            <person name="Odell C."/>
            <person name="Pearson D."/>
            <person name="Rajandream M.A."/>
            <person name="Rice P."/>
            <person name="Skelton J."/>
            <person name="Walsh S.V."/>
            <person name="Whitehead S."/>
            <person name="Barrell B.G."/>
        </authorList>
    </citation>
    <scope>NUCLEOTIDE SEQUENCE [LARGE SCALE GENOMIC DNA]</scope>
    <source>
        <strain>ATCC 204508 / S288c</strain>
    </source>
</reference>
<reference key="5">
    <citation type="journal article" date="2014" name="G3 (Bethesda)">
        <title>The reference genome sequence of Saccharomyces cerevisiae: Then and now.</title>
        <authorList>
            <person name="Engel S.R."/>
            <person name="Dietrich F.S."/>
            <person name="Fisk D.G."/>
            <person name="Binkley G."/>
            <person name="Balakrishnan R."/>
            <person name="Costanzo M.C."/>
            <person name="Dwight S.S."/>
            <person name="Hitz B.C."/>
            <person name="Karra K."/>
            <person name="Nash R.S."/>
            <person name="Weng S."/>
            <person name="Wong E.D."/>
            <person name="Lloyd P."/>
            <person name="Skrzypek M.S."/>
            <person name="Miyasato S.R."/>
            <person name="Simison M."/>
            <person name="Cherry J.M."/>
        </authorList>
    </citation>
    <scope>GENOME REANNOTATION</scope>
    <source>
        <strain>ATCC 204508 / S288c</strain>
    </source>
</reference>
<reference key="6">
    <citation type="journal article" date="2007" name="Genome Res.">
        <title>Approaching a complete repository of sequence-verified protein-encoding clones for Saccharomyces cerevisiae.</title>
        <authorList>
            <person name="Hu Y."/>
            <person name="Rolfs A."/>
            <person name="Bhullar B."/>
            <person name="Murthy T.V.S."/>
            <person name="Zhu C."/>
            <person name="Berger M.F."/>
            <person name="Camargo A.A."/>
            <person name="Kelley F."/>
            <person name="McCarron S."/>
            <person name="Jepson D."/>
            <person name="Richardson A."/>
            <person name="Raphael J."/>
            <person name="Moreira D."/>
            <person name="Taycher E."/>
            <person name="Zuo D."/>
            <person name="Mohr S."/>
            <person name="Kane M.F."/>
            <person name="Williamson J."/>
            <person name="Simpson A.J.G."/>
            <person name="Bulyk M.L."/>
            <person name="Harlow E."/>
            <person name="Marsischky G."/>
            <person name="Kolodner R.D."/>
            <person name="LaBaer J."/>
        </authorList>
    </citation>
    <scope>NUCLEOTIDE SEQUENCE [GENOMIC DNA]</scope>
    <source>
        <strain>ATCC 204508 / S288c</strain>
    </source>
</reference>
<reference key="7">
    <citation type="journal article" date="2000" name="Mol. Biol. Cell">
        <title>Essential functions of protein tyrosine phosphatases PTP2 and PTP3 and RIM11 tyrosine phosphorylation in Saccharomyces cerevisiae meiosis and sporulation.</title>
        <authorList>
            <person name="Zhan X.L."/>
            <person name="Hong Y."/>
            <person name="Zhu T."/>
            <person name="Mitchell A.P."/>
            <person name="Deschenes R.J."/>
            <person name="Guan K.L."/>
        </authorList>
    </citation>
    <scope>PHOSPHORYLATION AT TYR-199</scope>
</reference>
<reference key="8">
    <citation type="journal article" date="2003" name="Nature">
        <title>Global analysis of protein expression in yeast.</title>
        <authorList>
            <person name="Ghaemmaghami S."/>
            <person name="Huh W.-K."/>
            <person name="Bower K."/>
            <person name="Howson R.W."/>
            <person name="Belle A."/>
            <person name="Dephoure N."/>
            <person name="O'Shea E.K."/>
            <person name="Weissman J.S."/>
        </authorList>
    </citation>
    <scope>LEVEL OF PROTEIN EXPRESSION [LARGE SCALE ANALYSIS]</scope>
</reference>
<reference key="9">
    <citation type="journal article" date="2005" name="Mol. Cell. Proteomics">
        <title>Quantitative phosphoproteomics applied to the yeast pheromone signaling pathway.</title>
        <authorList>
            <person name="Gruhler A."/>
            <person name="Olsen J.V."/>
            <person name="Mohammed S."/>
            <person name="Mortensen P."/>
            <person name="Faergeman N.J."/>
            <person name="Mann M."/>
            <person name="Jensen O.N."/>
        </authorList>
    </citation>
    <scope>IDENTIFICATION BY MASS SPECTROMETRY [LARGE SCALE ANALYSIS]</scope>
    <source>
        <strain>YAL6B</strain>
    </source>
</reference>
<reference key="10">
    <citation type="journal article" date="2007" name="J. Proteome Res.">
        <title>Large-scale phosphorylation analysis of alpha-factor-arrested Saccharomyces cerevisiae.</title>
        <authorList>
            <person name="Li X."/>
            <person name="Gerber S.A."/>
            <person name="Rudner A.D."/>
            <person name="Beausoleil S.A."/>
            <person name="Haas W."/>
            <person name="Villen J."/>
            <person name="Elias J.E."/>
            <person name="Gygi S.P."/>
        </authorList>
    </citation>
    <scope>PHOSPHORYLATION [LARGE SCALE ANALYSIS] AT TYR-199</scope>
    <scope>IDENTIFICATION BY MASS SPECTROMETRY [LARGE SCALE ANALYSIS]</scope>
    <source>
        <strain>ADR376</strain>
    </source>
</reference>
<reference key="11">
    <citation type="journal article" date="2008" name="Mol. Cell. Proteomics">
        <title>A multidimensional chromatography technology for in-depth phosphoproteome analysis.</title>
        <authorList>
            <person name="Albuquerque C.P."/>
            <person name="Smolka M.B."/>
            <person name="Payne S.H."/>
            <person name="Bafna V."/>
            <person name="Eng J."/>
            <person name="Zhou H."/>
        </authorList>
    </citation>
    <scope>IDENTIFICATION BY MASS SPECTROMETRY [LARGE SCALE ANALYSIS]</scope>
</reference>
<reference key="12">
    <citation type="journal article" date="2009" name="Science">
        <title>Global analysis of Cdk1 substrate phosphorylation sites provides insights into evolution.</title>
        <authorList>
            <person name="Holt L.J."/>
            <person name="Tuch B.B."/>
            <person name="Villen J."/>
            <person name="Johnson A.D."/>
            <person name="Gygi S.P."/>
            <person name="Morgan D.O."/>
        </authorList>
    </citation>
    <scope>PHOSPHORYLATION [LARGE SCALE ANALYSIS] AT TYR-199</scope>
    <scope>IDENTIFICATION BY MASS SPECTROMETRY [LARGE SCALE ANALYSIS]</scope>
</reference>
<reference key="13">
    <citation type="journal article" date="2011" name="Genes Dev.">
        <title>Diverse protein kinase interactions identified by protein microarrays reveal novel connections between cellular processes.</title>
        <authorList>
            <person name="Fasolo J."/>
            <person name="Sboner A."/>
            <person name="Sun M.G."/>
            <person name="Yu H."/>
            <person name="Chen R."/>
            <person name="Sharon D."/>
            <person name="Kim P.M."/>
            <person name="Gerstein M."/>
            <person name="Snyder M."/>
        </authorList>
    </citation>
    <scope>INTERACTION WITH TDA1</scope>
</reference>
<protein>
    <recommendedName>
        <fullName>Serine/threonine-protein kinase RIM11/MSD1</fullName>
        <ecNumber>2.7.11.1</ecNumber>
    </recommendedName>
    <alternativeName>
        <fullName>Regulator of IME2 protein 11</fullName>
    </alternativeName>
</protein>
<sequence length="370" mass="43005">MNIQSNNSPNLSNNIVSKQVYYAHPPPTIDPNDPVQISFPTTEVVGHGSFGVVFATVIQETNEKVAIKKVLQDKRFKNRELEIMKMLSHINIIDLKYFFYERDSQDEIYLNLILEYMPQSLYQRLRHFVHQRTPMSRLEIKYYMFQLFKSLNYLHHFANVCHRDIKPQNLLVDPETWSLKLCDFGSAKQLKPTEPNVSYICSRYYRAPELIFGATNYTNQIDIWSSGCVMAELLLGQPMFPGESGIDQLVEIIKILGTPSKQEICSMNPNYMEHKFPQIKPIPLSRVFKKEDDQTVEFLADVLKYDPLERFNALQCLCSPYFDELKLDDGKINQITTDLKLLEFDENVELGHLSPDELSSVKKKLYPKSK</sequence>
<comment type="function">
    <text>Serine/threonine protein kinase that is thought to function in regulating kinetochore activity and entry into meiosis. Could phosphorylate IME1.</text>
</comment>
<comment type="catalytic activity">
    <reaction>
        <text>L-seryl-[protein] + ATP = O-phospho-L-seryl-[protein] + ADP + H(+)</text>
        <dbReference type="Rhea" id="RHEA:17989"/>
        <dbReference type="Rhea" id="RHEA-COMP:9863"/>
        <dbReference type="Rhea" id="RHEA-COMP:11604"/>
        <dbReference type="ChEBI" id="CHEBI:15378"/>
        <dbReference type="ChEBI" id="CHEBI:29999"/>
        <dbReference type="ChEBI" id="CHEBI:30616"/>
        <dbReference type="ChEBI" id="CHEBI:83421"/>
        <dbReference type="ChEBI" id="CHEBI:456216"/>
        <dbReference type="EC" id="2.7.11.1"/>
    </reaction>
</comment>
<comment type="catalytic activity">
    <reaction>
        <text>L-threonyl-[protein] + ATP = O-phospho-L-threonyl-[protein] + ADP + H(+)</text>
        <dbReference type="Rhea" id="RHEA:46608"/>
        <dbReference type="Rhea" id="RHEA-COMP:11060"/>
        <dbReference type="Rhea" id="RHEA-COMP:11605"/>
        <dbReference type="ChEBI" id="CHEBI:15378"/>
        <dbReference type="ChEBI" id="CHEBI:30013"/>
        <dbReference type="ChEBI" id="CHEBI:30616"/>
        <dbReference type="ChEBI" id="CHEBI:61977"/>
        <dbReference type="ChEBI" id="CHEBI:456216"/>
        <dbReference type="EC" id="2.7.11.1"/>
    </reaction>
</comment>
<comment type="subunit">
    <text evidence="5">Interacts with TDA1.</text>
</comment>
<comment type="interaction">
    <interactant intactId="EBI-10642">
        <id>P38615</id>
    </interactant>
    <interactant intactId="EBI-9199">
        <id>P21190</id>
        <label>IME1</label>
    </interactant>
    <organismsDiffer>false</organismsDiffer>
    <experiments>4</experiments>
</comment>
<comment type="interaction">
    <interactant intactId="EBI-10642">
        <id>P38615</id>
    </interactant>
    <interactant intactId="EBI-11850">
        <id>P25293</id>
        <label>NAP1</label>
    </interactant>
    <organismsDiffer>false</organismsDiffer>
    <experiments>8</experiments>
</comment>
<comment type="miscellaneous">
    <text evidence="4">Present with 6990 molecules/cell in log phase SD medium.</text>
</comment>
<comment type="similarity">
    <text evidence="6">Belongs to the protein kinase superfamily. CMGC Ser/Thr protein kinase family. GSK-3 subfamily.</text>
</comment>
<dbReference type="EC" id="2.7.11.1"/>
<dbReference type="EMBL" id="U03280">
    <property type="protein sequence ID" value="AAC48917.1"/>
    <property type="molecule type" value="Unassigned_DNA"/>
</dbReference>
<dbReference type="EMBL" id="L29284">
    <property type="protein sequence ID" value="AAB04166.1"/>
    <property type="molecule type" value="Genomic_DNA"/>
</dbReference>
<dbReference type="EMBL" id="L12761">
    <property type="protein sequence ID" value="AAA16206.1"/>
    <property type="molecule type" value="Unassigned_DNA"/>
</dbReference>
<dbReference type="EMBL" id="Z47071">
    <property type="protein sequence ID" value="CAA87353.1"/>
    <property type="molecule type" value="Genomic_DNA"/>
</dbReference>
<dbReference type="EMBL" id="AY557994">
    <property type="protein sequence ID" value="AAS56320.1"/>
    <property type="molecule type" value="Genomic_DNA"/>
</dbReference>
<dbReference type="EMBL" id="BK006946">
    <property type="protein sequence ID" value="DAA10036.1"/>
    <property type="molecule type" value="Genomic_DNA"/>
</dbReference>
<dbReference type="PIR" id="A56347">
    <property type="entry name" value="A56347"/>
</dbReference>
<dbReference type="RefSeq" id="NP_013859.1">
    <property type="nucleotide sequence ID" value="NM_001182641.1"/>
</dbReference>
<dbReference type="SMR" id="P38615"/>
<dbReference type="BioGRID" id="35316">
    <property type="interactions" value="201"/>
</dbReference>
<dbReference type="DIP" id="DIP-1566N"/>
<dbReference type="FunCoup" id="P38615">
    <property type="interactions" value="1339"/>
</dbReference>
<dbReference type="IntAct" id="P38615">
    <property type="interactions" value="42"/>
</dbReference>
<dbReference type="MINT" id="P38615"/>
<dbReference type="STRING" id="4932.YMR139W"/>
<dbReference type="iPTMnet" id="P38615"/>
<dbReference type="PaxDb" id="4932-YMR139W"/>
<dbReference type="PeptideAtlas" id="P38615"/>
<dbReference type="EnsemblFungi" id="YMR139W_mRNA">
    <property type="protein sequence ID" value="YMR139W"/>
    <property type="gene ID" value="YMR139W"/>
</dbReference>
<dbReference type="GeneID" id="855170"/>
<dbReference type="KEGG" id="sce:YMR139W"/>
<dbReference type="AGR" id="SGD:S000004747"/>
<dbReference type="SGD" id="S000004747">
    <property type="gene designation" value="RIM11"/>
</dbReference>
<dbReference type="VEuPathDB" id="FungiDB:YMR139W"/>
<dbReference type="eggNOG" id="KOG0658">
    <property type="taxonomic scope" value="Eukaryota"/>
</dbReference>
<dbReference type="GeneTree" id="ENSGT00520000055635"/>
<dbReference type="HOGENOM" id="CLU_000288_181_20_1"/>
<dbReference type="InParanoid" id="P38615"/>
<dbReference type="OMA" id="MKTTMPM"/>
<dbReference type="OrthoDB" id="272141at2759"/>
<dbReference type="BioCyc" id="YEAST:G3O-32832-MONOMER"/>
<dbReference type="BRENDA" id="2.7.11.26">
    <property type="organism ID" value="984"/>
</dbReference>
<dbReference type="Reactome" id="R-SCE-3371453">
    <property type="pathway name" value="Regulation of HSF1-mediated heat shock response"/>
</dbReference>
<dbReference type="Reactome" id="R-SCE-9856649">
    <property type="pathway name" value="Transcriptional and post-translational regulation of MITF-M expression and activity"/>
</dbReference>
<dbReference type="BioGRID-ORCS" id="855170">
    <property type="hits" value="1 hit in 13 CRISPR screens"/>
</dbReference>
<dbReference type="PRO" id="PR:P38615"/>
<dbReference type="Proteomes" id="UP000002311">
    <property type="component" value="Chromosome XIII"/>
</dbReference>
<dbReference type="RNAct" id="P38615">
    <property type="molecule type" value="protein"/>
</dbReference>
<dbReference type="GO" id="GO:0005737">
    <property type="term" value="C:cytoplasm"/>
    <property type="evidence" value="ECO:0007005"/>
    <property type="project" value="SGD"/>
</dbReference>
<dbReference type="GO" id="GO:0005634">
    <property type="term" value="C:nucleus"/>
    <property type="evidence" value="ECO:0000318"/>
    <property type="project" value="GO_Central"/>
</dbReference>
<dbReference type="GO" id="GO:0005524">
    <property type="term" value="F:ATP binding"/>
    <property type="evidence" value="ECO:0007669"/>
    <property type="project" value="UniProtKB-KW"/>
</dbReference>
<dbReference type="GO" id="GO:0004672">
    <property type="term" value="F:protein kinase activity"/>
    <property type="evidence" value="ECO:0007005"/>
    <property type="project" value="SGD"/>
</dbReference>
<dbReference type="GO" id="GO:0106310">
    <property type="term" value="F:protein serine kinase activity"/>
    <property type="evidence" value="ECO:0007669"/>
    <property type="project" value="RHEA"/>
</dbReference>
<dbReference type="GO" id="GO:0004674">
    <property type="term" value="F:protein serine/threonine kinase activity"/>
    <property type="evidence" value="ECO:0000314"/>
    <property type="project" value="SGD"/>
</dbReference>
<dbReference type="GO" id="GO:0004712">
    <property type="term" value="F:protein serine/threonine/tyrosine kinase activity"/>
    <property type="evidence" value="ECO:0000318"/>
    <property type="project" value="GO_Central"/>
</dbReference>
<dbReference type="GO" id="GO:0030437">
    <property type="term" value="P:ascospore formation"/>
    <property type="evidence" value="ECO:0000315"/>
    <property type="project" value="SGD"/>
</dbReference>
<dbReference type="GO" id="GO:0030154">
    <property type="term" value="P:cell differentiation"/>
    <property type="evidence" value="ECO:0000318"/>
    <property type="project" value="GO_Central"/>
</dbReference>
<dbReference type="GO" id="GO:0007165">
    <property type="term" value="P:signal transduction"/>
    <property type="evidence" value="ECO:0000318"/>
    <property type="project" value="GO_Central"/>
</dbReference>
<dbReference type="CDD" id="cd14137">
    <property type="entry name" value="STKc_GSK3"/>
    <property type="match status" value="1"/>
</dbReference>
<dbReference type="FunFam" id="3.30.200.20:FF:000009">
    <property type="entry name" value="Glycogen synthase kinase-3 beta"/>
    <property type="match status" value="1"/>
</dbReference>
<dbReference type="FunFam" id="1.10.510.10:FF:000688">
    <property type="entry name" value="RIM11p Protein kinase"/>
    <property type="match status" value="1"/>
</dbReference>
<dbReference type="Gene3D" id="3.30.200.20">
    <property type="entry name" value="Phosphorylase Kinase, domain 1"/>
    <property type="match status" value="1"/>
</dbReference>
<dbReference type="Gene3D" id="1.10.510.10">
    <property type="entry name" value="Transferase(Phosphotransferase) domain 1"/>
    <property type="match status" value="1"/>
</dbReference>
<dbReference type="InterPro" id="IPR050591">
    <property type="entry name" value="GSK-3"/>
</dbReference>
<dbReference type="InterPro" id="IPR011009">
    <property type="entry name" value="Kinase-like_dom_sf"/>
</dbReference>
<dbReference type="InterPro" id="IPR000719">
    <property type="entry name" value="Prot_kinase_dom"/>
</dbReference>
<dbReference type="InterPro" id="IPR017441">
    <property type="entry name" value="Protein_kinase_ATP_BS"/>
</dbReference>
<dbReference type="InterPro" id="IPR008271">
    <property type="entry name" value="Ser/Thr_kinase_AS"/>
</dbReference>
<dbReference type="InterPro" id="IPR039192">
    <property type="entry name" value="STKc_GSK3"/>
</dbReference>
<dbReference type="PANTHER" id="PTHR24057">
    <property type="entry name" value="GLYCOGEN SYNTHASE KINASE-3 ALPHA"/>
    <property type="match status" value="1"/>
</dbReference>
<dbReference type="PANTHER" id="PTHR24057:SF0">
    <property type="entry name" value="PROTEIN KINASE SHAGGY-RELATED"/>
    <property type="match status" value="1"/>
</dbReference>
<dbReference type="Pfam" id="PF00069">
    <property type="entry name" value="Pkinase"/>
    <property type="match status" value="1"/>
</dbReference>
<dbReference type="SMART" id="SM00220">
    <property type="entry name" value="S_TKc"/>
    <property type="match status" value="1"/>
</dbReference>
<dbReference type="SUPFAM" id="SSF56112">
    <property type="entry name" value="Protein kinase-like (PK-like)"/>
    <property type="match status" value="1"/>
</dbReference>
<dbReference type="PROSITE" id="PS00107">
    <property type="entry name" value="PROTEIN_KINASE_ATP"/>
    <property type="match status" value="1"/>
</dbReference>
<dbReference type="PROSITE" id="PS50011">
    <property type="entry name" value="PROTEIN_KINASE_DOM"/>
    <property type="match status" value="1"/>
</dbReference>
<dbReference type="PROSITE" id="PS00108">
    <property type="entry name" value="PROTEIN_KINASE_ST"/>
    <property type="match status" value="1"/>
</dbReference>
<evidence type="ECO:0000255" key="1">
    <source>
        <dbReference type="PROSITE-ProRule" id="PRU00159"/>
    </source>
</evidence>
<evidence type="ECO:0000255" key="2">
    <source>
        <dbReference type="PROSITE-ProRule" id="PRU10027"/>
    </source>
</evidence>
<evidence type="ECO:0000269" key="3">
    <source>
    </source>
</evidence>
<evidence type="ECO:0000269" key="4">
    <source>
    </source>
</evidence>
<evidence type="ECO:0000269" key="5">
    <source>
    </source>
</evidence>
<evidence type="ECO:0000305" key="6"/>
<evidence type="ECO:0007744" key="7">
    <source>
    </source>
</evidence>
<evidence type="ECO:0007744" key="8">
    <source>
    </source>
</evidence>
<feature type="chain" id="PRO_0000086319" description="Serine/threonine-protein kinase RIM11/MSD1">
    <location>
        <begin position="1"/>
        <end position="370"/>
    </location>
</feature>
<feature type="domain" description="Protein kinase" evidence="1">
    <location>
        <begin position="39"/>
        <end position="322"/>
    </location>
</feature>
<feature type="active site" description="Proton acceptor" evidence="1 2">
    <location>
        <position position="164"/>
    </location>
</feature>
<feature type="binding site" evidence="1">
    <location>
        <begin position="45"/>
        <end position="53"/>
    </location>
    <ligand>
        <name>ATP</name>
        <dbReference type="ChEBI" id="CHEBI:30616"/>
    </ligand>
</feature>
<feature type="binding site" evidence="1">
    <location>
        <position position="68"/>
    </location>
    <ligand>
        <name>ATP</name>
        <dbReference type="ChEBI" id="CHEBI:30616"/>
    </ligand>
</feature>
<feature type="modified residue" description="Phosphotyrosine" evidence="3 7 8">
    <location>
        <position position="199"/>
    </location>
</feature>
<feature type="sequence conflict" description="In Ref. 3; AAA16206." evidence="6" ref="3">
    <original>V</original>
    <variation>I</variation>
    <location>
        <position position="57"/>
    </location>
</feature>
<feature type="sequence conflict" description="In Ref. 6; AAS56320." evidence="6" ref="6">
    <original>K</original>
    <variation>R</variation>
    <location>
        <position position="331"/>
    </location>
</feature>
<feature type="sequence conflict" description="In Ref. 3; AAA16206." evidence="6" ref="3">
    <original>E</original>
    <variation>G</variation>
    <location>
        <position position="343"/>
    </location>
</feature>
<accession>P38615</accession>
<accession>D6VZW2</accession>
<accession>Q6Q5K4</accession>